<feature type="chain" id="PRO_0000284697" description="Probable N-acetyltransferase camello">
    <location>
        <begin position="1"/>
        <end position="219"/>
    </location>
</feature>
<feature type="transmembrane region" description="Helical" evidence="1">
    <location>
        <begin position="42"/>
        <end position="62"/>
    </location>
</feature>
<feature type="transmembrane region" description="Helical" evidence="1">
    <location>
        <begin position="64"/>
        <end position="84"/>
    </location>
</feature>
<feature type="domain" description="N-acetyltransferase" evidence="2">
    <location>
        <begin position="62"/>
        <end position="218"/>
    </location>
</feature>
<sequence>MANVSIRKYKNSDYETVNFLFVEGTKEHLPAACWNTLKKPRFYFIIIVACASIFMCTSSYVLSLTSLVALLAVGWYGLYLEFHGYASRCQREDMLDIENSYMMSDNTCFWVAEIDRKVVGIVGAKPLKEADDELFLLHLSVARDCRQQRIGTKLCQTVIDFARQRGFKAVCLETANIQDAAIKLYEAVGFKKSLVAIPPFLLNQYTSFTVIYYRYDIKS</sequence>
<protein>
    <recommendedName>
        <fullName>Probable N-acetyltransferase camello</fullName>
        <ecNumber>2.3.1.-</ecNumber>
    </recommendedName>
    <alternativeName>
        <fullName>Xcml</fullName>
    </alternativeName>
</protein>
<dbReference type="EC" id="2.3.1.-"/>
<dbReference type="EMBL" id="AF163313">
    <property type="protein sequence ID" value="AAF80482.1"/>
    <property type="molecule type" value="mRNA"/>
</dbReference>
<dbReference type="SMR" id="Q9I8W5"/>
<dbReference type="KEGG" id="xla:373623"/>
<dbReference type="AGR" id="Xenbase:XB-GENE-6252886"/>
<dbReference type="CTD" id="373623"/>
<dbReference type="Xenbase" id="XB-GENE-6252886">
    <property type="gene designation" value="nat8.6.S"/>
</dbReference>
<dbReference type="OrthoDB" id="41532at2759"/>
<dbReference type="Proteomes" id="UP000186698">
    <property type="component" value="Chromosome 1S"/>
</dbReference>
<dbReference type="Bgee" id="373623">
    <property type="expression patterns" value="Expressed in gastrula and 3 other cell types or tissues"/>
</dbReference>
<dbReference type="GO" id="GO:0005794">
    <property type="term" value="C:Golgi apparatus"/>
    <property type="evidence" value="ECO:0000314"/>
    <property type="project" value="UniProtKB"/>
</dbReference>
<dbReference type="GO" id="GO:0000139">
    <property type="term" value="C:Golgi membrane"/>
    <property type="evidence" value="ECO:0007669"/>
    <property type="project" value="UniProtKB-SubCell"/>
</dbReference>
<dbReference type="GO" id="GO:0008080">
    <property type="term" value="F:N-acetyltransferase activity"/>
    <property type="evidence" value="ECO:0000318"/>
    <property type="project" value="GO_Central"/>
</dbReference>
<dbReference type="GO" id="GO:0001702">
    <property type="term" value="P:gastrulation with mouth forming second"/>
    <property type="evidence" value="ECO:0000315"/>
    <property type="project" value="UniProtKB"/>
</dbReference>
<dbReference type="GO" id="GO:0007162">
    <property type="term" value="P:negative regulation of cell adhesion"/>
    <property type="evidence" value="ECO:0000315"/>
    <property type="project" value="UniProtKB"/>
</dbReference>
<dbReference type="CDD" id="cd04301">
    <property type="entry name" value="NAT_SF"/>
    <property type="match status" value="1"/>
</dbReference>
<dbReference type="FunFam" id="3.40.630.30:FF:000313">
    <property type="entry name" value="Probable N-acetyltransferase camello"/>
    <property type="match status" value="1"/>
</dbReference>
<dbReference type="Gene3D" id="3.40.630.30">
    <property type="match status" value="1"/>
</dbReference>
<dbReference type="InterPro" id="IPR016181">
    <property type="entry name" value="Acyl_CoA_acyltransferase"/>
</dbReference>
<dbReference type="InterPro" id="IPR000182">
    <property type="entry name" value="GNAT_dom"/>
</dbReference>
<dbReference type="InterPro" id="IPR050769">
    <property type="entry name" value="NAT_camello-type"/>
</dbReference>
<dbReference type="PANTHER" id="PTHR13947">
    <property type="entry name" value="GNAT FAMILY N-ACETYLTRANSFERASE"/>
    <property type="match status" value="1"/>
</dbReference>
<dbReference type="PANTHER" id="PTHR13947:SF55">
    <property type="entry name" value="N-ACETYLTRANSFERASE CAMELLO-RELATED"/>
    <property type="match status" value="1"/>
</dbReference>
<dbReference type="Pfam" id="PF00583">
    <property type="entry name" value="Acetyltransf_1"/>
    <property type="match status" value="1"/>
</dbReference>
<dbReference type="SUPFAM" id="SSF55729">
    <property type="entry name" value="Acyl-CoA N-acyltransferases (Nat)"/>
    <property type="match status" value="1"/>
</dbReference>
<dbReference type="PROSITE" id="PS51186">
    <property type="entry name" value="GNAT"/>
    <property type="match status" value="1"/>
</dbReference>
<comment type="function">
    <text evidence="3">Plays a role in regulation of gastrulation, possibly by controlled reduction of cell adhesion which is necessary for optimal cell motility.</text>
</comment>
<comment type="subcellular location">
    <subcellularLocation>
        <location evidence="3">Golgi apparatus membrane</location>
        <topology evidence="3">Multi-pass membrane protein</topology>
    </subcellularLocation>
</comment>
<comment type="tissue specificity">
    <text evidence="3">At the beginning of gastrulation, expressed in deep cells of the presumptive mesoderm. At later gastrulation stages, expressed at the interface between already involuted and preinvoluted mesoderm. At late neurula and tailbud stages, expressed in the deep mass of cells lying ventrally and laterally to the closed blastopore.</text>
</comment>
<comment type="developmental stage">
    <text evidence="3">Expression is first detected after midblastula transition, reaches its maximum at stages 12-15 and continues to be expressed until at least stage 27.</text>
</comment>
<comment type="similarity">
    <text evidence="3">Belongs to the camello family.</text>
</comment>
<reference evidence="4 5" key="1">
    <citation type="journal article" date="2001" name="Dev. Biol.">
        <title>Overexpression of camello, a member of a novel protein family, reduces blastomere adhesion and inhibits gastrulation in Xenopus laevis.</title>
        <authorList>
            <person name="Popsueva A.E."/>
            <person name="Luchinskaya N.N."/>
            <person name="Ludwig A.V."/>
            <person name="Zinovjeva O.Y."/>
            <person name="Poteryaev D.A."/>
            <person name="Feigelman M.M."/>
            <person name="Ponomarev M.B."/>
            <person name="Berekelya L."/>
            <person name="Belyavsky A.V."/>
        </authorList>
    </citation>
    <scope>NUCLEOTIDE SEQUENCE [MRNA]</scope>
    <scope>FUNCTION</scope>
    <scope>SUBCELLULAR LOCATION</scope>
    <scope>TISSUE SPECIFICITY</scope>
    <scope>DEVELOPMENTAL STAGE</scope>
    <source>
        <tissue evidence="3">Gastrula</tissue>
    </source>
</reference>
<proteinExistence type="evidence at transcript level"/>
<evidence type="ECO:0000255" key="1"/>
<evidence type="ECO:0000255" key="2">
    <source>
        <dbReference type="PROSITE-ProRule" id="PRU00532"/>
    </source>
</evidence>
<evidence type="ECO:0000269" key="3">
    <source>
    </source>
</evidence>
<evidence type="ECO:0000305" key="4"/>
<evidence type="ECO:0000312" key="5">
    <source>
        <dbReference type="EMBL" id="AAF80482.1"/>
    </source>
</evidence>
<name>CMLO_XENLA</name>
<keyword id="KW-0012">Acyltransferase</keyword>
<keyword id="KW-0217">Developmental protein</keyword>
<keyword id="KW-0306">Gastrulation</keyword>
<keyword id="KW-0333">Golgi apparatus</keyword>
<keyword id="KW-0472">Membrane</keyword>
<keyword id="KW-1185">Reference proteome</keyword>
<keyword id="KW-0808">Transferase</keyword>
<keyword id="KW-0812">Transmembrane</keyword>
<keyword id="KW-1133">Transmembrane helix</keyword>
<organism>
    <name type="scientific">Xenopus laevis</name>
    <name type="common">African clawed frog</name>
    <dbReference type="NCBI Taxonomy" id="8355"/>
    <lineage>
        <taxon>Eukaryota</taxon>
        <taxon>Metazoa</taxon>
        <taxon>Chordata</taxon>
        <taxon>Craniata</taxon>
        <taxon>Vertebrata</taxon>
        <taxon>Euteleostomi</taxon>
        <taxon>Amphibia</taxon>
        <taxon>Batrachia</taxon>
        <taxon>Anura</taxon>
        <taxon>Pipoidea</taxon>
        <taxon>Pipidae</taxon>
        <taxon>Xenopodinae</taxon>
        <taxon>Xenopus</taxon>
        <taxon>Xenopus</taxon>
    </lineage>
</organism>
<accession>Q9I8W5</accession>
<gene>
    <name evidence="5" type="primary">cml</name>
</gene>